<organism>
    <name type="scientific">Rotavirus A (strain RVA/Cow/France/RF/1975/G6P6[1])</name>
    <name type="common">RV-A</name>
    <dbReference type="NCBI Taxonomy" id="10933"/>
    <lineage>
        <taxon>Viruses</taxon>
        <taxon>Riboviria</taxon>
        <taxon>Orthornavirae</taxon>
        <taxon>Duplornaviricota</taxon>
        <taxon>Resentoviricetes</taxon>
        <taxon>Reovirales</taxon>
        <taxon>Sedoreoviridae</taxon>
        <taxon>Rotavirus</taxon>
        <taxon>Rotavirus A</taxon>
    </lineage>
</organism>
<keyword id="KW-0342">GTP-binding</keyword>
<keyword id="KW-0945">Host-virus interaction</keyword>
<keyword id="KW-0378">Hydrolase</keyword>
<keyword id="KW-1090">Inhibition of host innate immune response by virus</keyword>
<keyword id="KW-0489">Methyltransferase</keyword>
<keyword id="KW-0506">mRNA capping</keyword>
<keyword id="KW-0507">mRNA processing</keyword>
<keyword id="KW-0511">Multifunctional enzyme</keyword>
<keyword id="KW-0547">Nucleotide-binding</keyword>
<keyword id="KW-0548">Nucleotidyltransferase</keyword>
<keyword id="KW-0694">RNA-binding</keyword>
<keyword id="KW-0949">S-adenosyl-L-methionine</keyword>
<keyword id="KW-0808">Transferase</keyword>
<keyword id="KW-0899">Viral immunoevasion</keyword>
<keyword id="KW-0946">Virion</keyword>
<evidence type="ECO:0000255" key="1">
    <source>
        <dbReference type="HAMAP-Rule" id="MF_04128"/>
    </source>
</evidence>
<organismHost>
    <name type="scientific">Bos taurus</name>
    <name type="common">Bovine</name>
    <dbReference type="NCBI Taxonomy" id="9913"/>
</organismHost>
<accession>Q8BB04</accession>
<comment type="function">
    <text evidence="1">Multifunctional enzyme involved in mRNA capping. Catalyzes the formation of the 5' cap structure on the viral plus-strand transcripts. Specifically binds to GTP and displays guanylyltransferase and methyltransferase activities. Has affinity for ssRNA but not for dsRNA. Capping activity is non-specific and caps RNAs that initiate with either a G or an A residue. Together with VP1 polymerase, forms a VP1-VP3 complex positioned near the channels situated at each of the five-fold vertices of the core. Following infection, the outermost layer of the virus is lost, leaving a double-layered particle (DLP) made up of the core and VP6 shell. VP1 then catalyzes the transcription of fully conservative plus-strand genomic RNAs that are capped by VP3 and extruded through the DLP's channels into the cytoplasm where they function as mRNAs for translation of viral proteins. DLPs probably have an RNA triphosphatase activity as well, whereas open cores do not.</text>
</comment>
<comment type="function">
    <text evidence="1">Counteracts the host innate immune response thanks to its phosphodiesterase that degrades the 5'-triphosphorylated, 2'-5' linked adenylate oligomers produced by the host cell IFN-inducible 2',5'-oligoadenylate synthetase (OAS). The host RNaseL is therefore not activated.</text>
</comment>
<comment type="catalytic activity">
    <reaction evidence="1">
        <text>a 5'-end diphospho-ribonucleoside in mRNA + GTP + H(+) = a 5'-end (5'-triphosphoguanosine)-ribonucleoside in mRNA + diphosphate</text>
        <dbReference type="Rhea" id="RHEA:67012"/>
        <dbReference type="Rhea" id="RHEA-COMP:17165"/>
        <dbReference type="Rhea" id="RHEA-COMP:17166"/>
        <dbReference type="ChEBI" id="CHEBI:15378"/>
        <dbReference type="ChEBI" id="CHEBI:33019"/>
        <dbReference type="ChEBI" id="CHEBI:37565"/>
        <dbReference type="ChEBI" id="CHEBI:167616"/>
        <dbReference type="ChEBI" id="CHEBI:167617"/>
        <dbReference type="EC" id="2.7.7.50"/>
    </reaction>
</comment>
<comment type="catalytic activity">
    <reaction evidence="1">
        <text>a 5'-end (5'-triphosphoguanosine)-ribonucleoside in mRNA + S-adenosyl-L-methionine = a 5'-end (N(7)-methyl 5'-triphosphoguanosine)-ribonucleoside in mRNA + S-adenosyl-L-homocysteine</text>
        <dbReference type="Rhea" id="RHEA:67008"/>
        <dbReference type="Rhea" id="RHEA-COMP:17166"/>
        <dbReference type="Rhea" id="RHEA-COMP:17167"/>
        <dbReference type="ChEBI" id="CHEBI:57856"/>
        <dbReference type="ChEBI" id="CHEBI:59789"/>
        <dbReference type="ChEBI" id="CHEBI:156461"/>
        <dbReference type="ChEBI" id="CHEBI:167617"/>
        <dbReference type="EC" id="2.1.1.56"/>
    </reaction>
</comment>
<comment type="catalytic activity">
    <reaction evidence="1">
        <text>5'-triphosphoadenylyl-(2'-&gt;5')-adenylyl-(2'-&gt;5')-adenosine + 2 H2O = 2 AMP + ATP + 2 H(+)</text>
        <dbReference type="Rhea" id="RHEA:45964"/>
        <dbReference type="ChEBI" id="CHEBI:15377"/>
        <dbReference type="ChEBI" id="CHEBI:15378"/>
        <dbReference type="ChEBI" id="CHEBI:30616"/>
        <dbReference type="ChEBI" id="CHEBI:67143"/>
        <dbReference type="ChEBI" id="CHEBI:456215"/>
    </reaction>
</comment>
<comment type="subunit">
    <text evidence="1">Interacts with VP1. Interacts with VP2.</text>
</comment>
<comment type="subcellular location">
    <subcellularLocation>
        <location evidence="1">Virion</location>
    </subcellularLocation>
    <text evidence="1">Attached inside the inner capsid as a minor component. There are about 11 to 12 copies per virion.</text>
</comment>
<comment type="domain">
    <text evidence="1">Contains a bipartite N7-methyltransferase domain, a 2'-O-methyltransferase domain and a GTase/RTPase domain. The C-terminus contains a phosphodiesterase domain that degrades the 5'-triphosphorylated, 2'-5' linked adenylate oligomers produced by the host cell in response to IFN stimulation.</text>
</comment>
<comment type="similarity">
    <text evidence="1">Belongs to the rotavirus VP3 family.</text>
</comment>
<reference key="1">
    <citation type="submission" date="2002-05" db="EMBL/GenBank/DDBJ databases">
        <title>Bovine rotavirus RF gene 3 encoding VP3.</title>
        <authorList>
            <person name="Charpilienne A."/>
            <person name="Poncet D."/>
            <person name="Cohen J."/>
        </authorList>
    </citation>
    <scope>NUCLEOTIDE SEQUENCE [MRNA]</scope>
</reference>
<name>VP3_ROTRF</name>
<dbReference type="EC" id="3.1.4.-" evidence="1"/>
<dbReference type="EC" id="2.7.7.50" evidence="1"/>
<dbReference type="EC" id="2.1.1.56" evidence="1"/>
<dbReference type="EMBL" id="AY116592">
    <property type="protein sequence ID" value="AAM80568.1"/>
    <property type="molecule type" value="mRNA"/>
</dbReference>
<dbReference type="SMR" id="Q8BB04"/>
<dbReference type="Proteomes" id="UP000007179">
    <property type="component" value="Genome"/>
</dbReference>
<dbReference type="GO" id="GO:0019013">
    <property type="term" value="C:viral nucleocapsid"/>
    <property type="evidence" value="ECO:0007669"/>
    <property type="project" value="UniProtKB-UniRule"/>
</dbReference>
<dbReference type="GO" id="GO:0005525">
    <property type="term" value="F:GTP binding"/>
    <property type="evidence" value="ECO:0007669"/>
    <property type="project" value="UniProtKB-UniRule"/>
</dbReference>
<dbReference type="GO" id="GO:0016787">
    <property type="term" value="F:hydrolase activity"/>
    <property type="evidence" value="ECO:0007669"/>
    <property type="project" value="UniProtKB-KW"/>
</dbReference>
<dbReference type="GO" id="GO:0004482">
    <property type="term" value="F:mRNA 5'-cap (guanine-N7-)-methyltransferase activity"/>
    <property type="evidence" value="ECO:0007669"/>
    <property type="project" value="UniProtKB-UniRule"/>
</dbReference>
<dbReference type="GO" id="GO:0004484">
    <property type="term" value="F:mRNA guanylyltransferase activity"/>
    <property type="evidence" value="ECO:0007669"/>
    <property type="project" value="UniProtKB-UniRule"/>
</dbReference>
<dbReference type="GO" id="GO:0003723">
    <property type="term" value="F:RNA binding"/>
    <property type="evidence" value="ECO:0007669"/>
    <property type="project" value="UniProtKB-UniRule"/>
</dbReference>
<dbReference type="GO" id="GO:0052170">
    <property type="term" value="P:symbiont-mediated suppression of host innate immune response"/>
    <property type="evidence" value="ECO:0007669"/>
    <property type="project" value="UniProtKB-KW"/>
</dbReference>
<dbReference type="GO" id="GO:0016032">
    <property type="term" value="P:viral process"/>
    <property type="evidence" value="ECO:0007669"/>
    <property type="project" value="UniProtKB-UniRule"/>
</dbReference>
<dbReference type="CDD" id="cd20757">
    <property type="entry name" value="capping_2-OMTase_Rotavirus"/>
    <property type="match status" value="1"/>
</dbReference>
<dbReference type="HAMAP" id="MF_04124">
    <property type="entry name" value="Rota_VP3"/>
    <property type="match status" value="1"/>
</dbReference>
<dbReference type="HAMAP" id="MF_04128">
    <property type="entry name" value="Rota_VP3_A"/>
    <property type="match status" value="1"/>
</dbReference>
<dbReference type="InterPro" id="IPR011181">
    <property type="entry name" value="VP3_Rotav"/>
</dbReference>
<dbReference type="Pfam" id="PF06929">
    <property type="entry name" value="Rotavirus_VP3"/>
    <property type="match status" value="1"/>
</dbReference>
<dbReference type="PIRSF" id="PIRSF004015">
    <property type="entry name" value="LigT_rotavirus"/>
    <property type="match status" value="1"/>
</dbReference>
<dbReference type="PROSITE" id="PS51589">
    <property type="entry name" value="SAM_MT56_VP3"/>
    <property type="match status" value="1"/>
</dbReference>
<protein>
    <recommendedName>
        <fullName evidence="1">Protein VP3</fullName>
    </recommendedName>
    <domain>
        <recommendedName>
            <fullName evidence="1">2',5'-phosphodiesterase</fullName>
            <ecNumber evidence="1">3.1.4.-</ecNumber>
        </recommendedName>
    </domain>
    <domain>
        <recommendedName>
            <fullName evidence="1">mRNA guanylyltransferase</fullName>
            <ecNumber evidence="1">2.7.7.50</ecNumber>
        </recommendedName>
    </domain>
    <domain>
        <recommendedName>
            <fullName evidence="1">mRNA (guanine-N(7))-methyltransferase</fullName>
            <ecNumber evidence="1">2.1.1.56</ecNumber>
        </recommendedName>
    </domain>
</protein>
<feature type="chain" id="PRO_0000368073" description="Protein VP3">
    <location>
        <begin position="1"/>
        <end position="835"/>
    </location>
</feature>
<feature type="region of interest" description="N7-methyltransferase activity" evidence="1">
    <location>
        <begin position="171"/>
        <end position="245"/>
    </location>
</feature>
<feature type="region of interest" description="2'-O-methyltransferase activity" evidence="1">
    <location>
        <begin position="246"/>
        <end position="428"/>
    </location>
</feature>
<feature type="region of interest" description="N7-methyltransferase activity" evidence="1">
    <location>
        <begin position="429"/>
        <end position="555"/>
    </location>
</feature>
<feature type="region of interest" description="GTase/RTPase activity" evidence="1">
    <location>
        <begin position="556"/>
        <end position="692"/>
    </location>
</feature>
<feature type="region of interest" description="2'-5'-phosphodiesterase activity" evidence="1">
    <location>
        <begin position="693"/>
        <end position="835"/>
    </location>
</feature>
<feature type="active site" description="For 2'-5'-phosphodiesterase activity" evidence="1">
    <location>
        <position position="718"/>
    </location>
</feature>
<feature type="active site" description="For 2'-5'-phosphodiesterase activity" evidence="1">
    <location>
        <position position="720"/>
    </location>
</feature>
<feature type="active site" description="For 2'-5'-phosphodiesterase activity" evidence="1">
    <location>
        <position position="797"/>
    </location>
</feature>
<feature type="active site" description="For 2'-5'-phosphodiesterase activity" evidence="1">
    <location>
        <position position="799"/>
    </location>
</feature>
<sequence length="835" mass="98021">MKVLALRHSVAQVYADTQIYTHDETKDDYENAFLISNLTTHNILYLNYSVKTLQILNKSGIAAIEIQKNDELFTLIRCNFTYDYIDDIVYLHDYSYYTNNEIRTDQHWVTKTNIEDYLLPGWKLMYVGYNGNDTRGHYNFSFKCQNAATDDDAIIEYIYSNELDFQNFILKKIKERMTTSLPIARLSNRVFRDKLFKTLVSDHSRVVNVGPRNESMFTFLDHPSIKQFSNGPYLVKDTIKLKQERWLGKRLSQFDIGQYKNMLNVLTTLYQYYDMYHEKPIIYMVGSAPSYWIHDVKQYSDLKFETWDPLDTPYSDLHHKELFYASDVTKLKDNSILYVDIRTDRENADWKTWRKIVEEQTANNLNIAYKYLSTGKAKVCCVKMTAMDLELPISAKLLHHPTTEIRSEFYLIMDIWDSKNTKRFIPKGVLYSYINNTITENVFIQQPFKLRTLRNEYVVALYALSNDFNNREDVVKLVNNQKNALITVRINNTFKDEPKVGFKDIYDWTFLPTDFETNESIITSYDGCLGMFGLSISLASKPTGNNHLFILSGTNKYFKLDQFANHMSISRRSHQIRFSESATSYSGYIFRDLSNNNFNLIGTNVENSVSGHVYNALIYYRYNYSFDLKRWIYLHSTNKASIEGGRYYEHAPIELIYACRSAREFAKLQDDLTVLRYSNEIENYINKVYSITYADDPNYFIGIKFKNIPYEYDVKVPHLTFGVLNISDSMVPDVVAILKKFKNELFRMDVTTSYTYMLSDEIYVANVSGVLSTYFKLYNAFYKEQITFGQSRMFIPHITLSFSNKRVVRIGSTRLNIDFIYLRKIKGDTVFDMTE</sequence>
<proteinExistence type="evidence at transcript level"/>